<comment type="catalytic activity">
    <reaction evidence="1">
        <text>(R)-pantothenate + ATP = (R)-4'-phosphopantothenate + ADP + H(+)</text>
        <dbReference type="Rhea" id="RHEA:16373"/>
        <dbReference type="ChEBI" id="CHEBI:10986"/>
        <dbReference type="ChEBI" id="CHEBI:15378"/>
        <dbReference type="ChEBI" id="CHEBI:29032"/>
        <dbReference type="ChEBI" id="CHEBI:30616"/>
        <dbReference type="ChEBI" id="CHEBI:456216"/>
        <dbReference type="EC" id="2.7.1.33"/>
    </reaction>
</comment>
<comment type="pathway">
    <text evidence="1">Cofactor biosynthesis; coenzyme A biosynthesis; CoA from (R)-pantothenate: step 1/5.</text>
</comment>
<comment type="subcellular location">
    <subcellularLocation>
        <location evidence="1">Cytoplasm</location>
    </subcellularLocation>
</comment>
<comment type="similarity">
    <text evidence="1">Belongs to the prokaryotic pantothenate kinase family.</text>
</comment>
<name>COAA_LEVBA</name>
<accession>Q03PP4</accession>
<reference key="1">
    <citation type="journal article" date="2006" name="Proc. Natl. Acad. Sci. U.S.A.">
        <title>Comparative genomics of the lactic acid bacteria.</title>
        <authorList>
            <person name="Makarova K.S."/>
            <person name="Slesarev A."/>
            <person name="Wolf Y.I."/>
            <person name="Sorokin A."/>
            <person name="Mirkin B."/>
            <person name="Koonin E.V."/>
            <person name="Pavlov A."/>
            <person name="Pavlova N."/>
            <person name="Karamychev V."/>
            <person name="Polouchine N."/>
            <person name="Shakhova V."/>
            <person name="Grigoriev I."/>
            <person name="Lou Y."/>
            <person name="Rohksar D."/>
            <person name="Lucas S."/>
            <person name="Huang K."/>
            <person name="Goodstein D.M."/>
            <person name="Hawkins T."/>
            <person name="Plengvidhya V."/>
            <person name="Welker D."/>
            <person name="Hughes J."/>
            <person name="Goh Y."/>
            <person name="Benson A."/>
            <person name="Baldwin K."/>
            <person name="Lee J.-H."/>
            <person name="Diaz-Muniz I."/>
            <person name="Dosti B."/>
            <person name="Smeianov V."/>
            <person name="Wechter W."/>
            <person name="Barabote R."/>
            <person name="Lorca G."/>
            <person name="Altermann E."/>
            <person name="Barrangou R."/>
            <person name="Ganesan B."/>
            <person name="Xie Y."/>
            <person name="Rawsthorne H."/>
            <person name="Tamir D."/>
            <person name="Parker C."/>
            <person name="Breidt F."/>
            <person name="Broadbent J.R."/>
            <person name="Hutkins R."/>
            <person name="O'Sullivan D."/>
            <person name="Steele J."/>
            <person name="Unlu G."/>
            <person name="Saier M.H. Jr."/>
            <person name="Klaenhammer T."/>
            <person name="Richardson P."/>
            <person name="Kozyavkin S."/>
            <person name="Weimer B.C."/>
            <person name="Mills D.A."/>
        </authorList>
    </citation>
    <scope>NUCLEOTIDE SEQUENCE [LARGE SCALE GENOMIC DNA]</scope>
    <source>
        <strain>ATCC 367 / BCRC 12310 / CIP 105137 / JCM 1170 / LMG 11437 / NCIMB 947 / NCTC 947</strain>
    </source>
</reference>
<feature type="chain" id="PRO_1000043218" description="Pantothenate kinase">
    <location>
        <begin position="1"/>
        <end position="307"/>
    </location>
</feature>
<feature type="binding site" evidence="1">
    <location>
        <begin position="90"/>
        <end position="97"/>
    </location>
    <ligand>
        <name>ATP</name>
        <dbReference type="ChEBI" id="CHEBI:30616"/>
    </ligand>
</feature>
<keyword id="KW-0067">ATP-binding</keyword>
<keyword id="KW-0173">Coenzyme A biosynthesis</keyword>
<keyword id="KW-0963">Cytoplasm</keyword>
<keyword id="KW-0418">Kinase</keyword>
<keyword id="KW-0547">Nucleotide-binding</keyword>
<keyword id="KW-1185">Reference proteome</keyword>
<keyword id="KW-0808">Transferase</keyword>
<evidence type="ECO:0000255" key="1">
    <source>
        <dbReference type="HAMAP-Rule" id="MF_00215"/>
    </source>
</evidence>
<organism>
    <name type="scientific">Levilactobacillus brevis (strain ATCC 367 / BCRC 12310 / CIP 105137 / JCM 1170 / LMG 11437 / NCIMB 947 / NCTC 947)</name>
    <name type="common">Lactobacillus brevis</name>
    <dbReference type="NCBI Taxonomy" id="387344"/>
    <lineage>
        <taxon>Bacteria</taxon>
        <taxon>Bacillati</taxon>
        <taxon>Bacillota</taxon>
        <taxon>Bacilli</taxon>
        <taxon>Lactobacillales</taxon>
        <taxon>Lactobacillaceae</taxon>
        <taxon>Levilactobacillus</taxon>
    </lineage>
</organism>
<dbReference type="EC" id="2.7.1.33" evidence="1"/>
<dbReference type="EMBL" id="CP000416">
    <property type="protein sequence ID" value="ABJ64828.1"/>
    <property type="molecule type" value="Genomic_DNA"/>
</dbReference>
<dbReference type="RefSeq" id="WP_011668379.1">
    <property type="nucleotide sequence ID" value="NC_008497.1"/>
</dbReference>
<dbReference type="SMR" id="Q03PP4"/>
<dbReference type="STRING" id="387344.LVIS_1761"/>
<dbReference type="KEGG" id="lbr:LVIS_1761"/>
<dbReference type="PATRIC" id="fig|387344.15.peg.1669"/>
<dbReference type="eggNOG" id="COG1072">
    <property type="taxonomic scope" value="Bacteria"/>
</dbReference>
<dbReference type="HOGENOM" id="CLU_053818_1_1_9"/>
<dbReference type="UniPathway" id="UPA00241">
    <property type="reaction ID" value="UER00352"/>
</dbReference>
<dbReference type="Proteomes" id="UP000001652">
    <property type="component" value="Chromosome"/>
</dbReference>
<dbReference type="GO" id="GO:0005737">
    <property type="term" value="C:cytoplasm"/>
    <property type="evidence" value="ECO:0007669"/>
    <property type="project" value="UniProtKB-SubCell"/>
</dbReference>
<dbReference type="GO" id="GO:0005524">
    <property type="term" value="F:ATP binding"/>
    <property type="evidence" value="ECO:0007669"/>
    <property type="project" value="UniProtKB-UniRule"/>
</dbReference>
<dbReference type="GO" id="GO:0004594">
    <property type="term" value="F:pantothenate kinase activity"/>
    <property type="evidence" value="ECO:0007669"/>
    <property type="project" value="UniProtKB-UniRule"/>
</dbReference>
<dbReference type="GO" id="GO:0015937">
    <property type="term" value="P:coenzyme A biosynthetic process"/>
    <property type="evidence" value="ECO:0007669"/>
    <property type="project" value="UniProtKB-UniRule"/>
</dbReference>
<dbReference type="CDD" id="cd02025">
    <property type="entry name" value="PanK"/>
    <property type="match status" value="1"/>
</dbReference>
<dbReference type="Gene3D" id="3.40.50.300">
    <property type="entry name" value="P-loop containing nucleotide triphosphate hydrolases"/>
    <property type="match status" value="1"/>
</dbReference>
<dbReference type="HAMAP" id="MF_00215">
    <property type="entry name" value="Pantothen_kinase_1"/>
    <property type="match status" value="1"/>
</dbReference>
<dbReference type="InterPro" id="IPR027417">
    <property type="entry name" value="P-loop_NTPase"/>
</dbReference>
<dbReference type="InterPro" id="IPR004566">
    <property type="entry name" value="PanK"/>
</dbReference>
<dbReference type="InterPro" id="IPR006083">
    <property type="entry name" value="PRK/URK"/>
</dbReference>
<dbReference type="NCBIfam" id="TIGR00554">
    <property type="entry name" value="panK_bact"/>
    <property type="match status" value="1"/>
</dbReference>
<dbReference type="PANTHER" id="PTHR10285">
    <property type="entry name" value="URIDINE KINASE"/>
    <property type="match status" value="1"/>
</dbReference>
<dbReference type="Pfam" id="PF00485">
    <property type="entry name" value="PRK"/>
    <property type="match status" value="1"/>
</dbReference>
<dbReference type="PIRSF" id="PIRSF000545">
    <property type="entry name" value="Pantothenate_kin"/>
    <property type="match status" value="1"/>
</dbReference>
<dbReference type="SUPFAM" id="SSF52540">
    <property type="entry name" value="P-loop containing nucleoside triphosphate hydrolases"/>
    <property type="match status" value="1"/>
</dbReference>
<proteinExistence type="inferred from homology"/>
<gene>
    <name evidence="1" type="primary">coaA</name>
    <name type="ordered locus">LVIS_1761</name>
</gene>
<protein>
    <recommendedName>
        <fullName evidence="1">Pantothenate kinase</fullName>
        <ecNumber evidence="1">2.7.1.33</ecNumber>
    </recommendedName>
    <alternativeName>
        <fullName evidence="1">Pantothenic acid kinase</fullName>
    </alternativeName>
</protein>
<sequence>MRDPINYNAFTREQWQQFSADATLPLTQESLRQIKAFNDRISLQDVQDIYIPLVHLVHLEFDHYRQLQRDKATFLKQPQQRVPFIIGIAGSVAVGKSTAARLLEVLLNHYFTDQRIQLITTDGFLYSNEELKKRNLMARKGFPESYDMTALIQFLNDVKAGKELIKAPVYSHKVYDIVPDQFDYIMHPDVLIVEGINTLQLPTNEQIYVSDFTDFSIYVDADPTLIESWFLERFELLLATAFQDPTNYYYPYAIGDHDEAIAKSKRVWRDIDLKNLEEYILPTRNRADMIIHKTFGHRIDRLLLRKY</sequence>